<proteinExistence type="evidence at transcript level"/>
<sequence>MSNPVSINNSGSISNSNLNNESLSPSRLSSSPNSKSMELNGKRTLKSSVVKTLLNRSSSGNNLNNTVTTRRAAGSFTSNYQNIYTPNNNSYNSSNNNNNNNNDDDTVSVDGDNPPDSPKSTKDHSNSVGSNSGGGGGGSSGGLNMSMNNIKQQQQDNLIKQQQKDRSLWTVRSLKEHAEVLDIMERLKPVNRAISFGQIYAREETQFDFDPLIGRDTMLQLILQHLQFEGLMDSRKLLEEEARVQYPEYAINESRLVTLLRTALKDSERVFQLTLDDKKRDSQQQLEEHLAFLGLFKDETATDIMGEDVNIYDEPENSNIIYVDDKEKEKEKEKEKEKEKDKFGPNSTNSLSGSGSSPNIPSGMNNNSSSIGNNSIGNSNSYSNGELSPLSASTLLMMSPQNKNSIETNKPQVKAASLNKLVILLTPDNNHDLEYTKTFLLTYQSFTTPEMLLEKLVQRYHVPQKPGQSLDDWKKSAVPIQLRVANVIRTWIKDYFSDFNDKLIQNVKSLYENMKQSGNMSHAKILSESLNAKIKGMVGMDDQKRAPTFTSPAPEPKVPKNIWSQTLDIFSVDEEEIARQLTLMDFEIFSAIKSTELLNQSWNKPKLRHRSPNVLTLINRFNEISQWTATSILSYPKVKDRARIMAKFIKIAEYCMRHLNNFNTSMAILSGLNASSVHRLKFTKEELPKHTQQVYTELQFHLSSAQAYKEYRALLAKANPPCLPYLGVYLTDLTFFEEGNPDFIQGFINFGKRKLIYGSISNVQSFQNAKYNLQPVYQITKLLKGFKLLEENDLYSRSMSFEPRNKERSEIL</sequence>
<evidence type="ECO:0000250" key="1"/>
<evidence type="ECO:0000255" key="2">
    <source>
        <dbReference type="PROSITE-ProRule" id="PRU00126"/>
    </source>
</evidence>
<evidence type="ECO:0000255" key="3">
    <source>
        <dbReference type="PROSITE-ProRule" id="PRU00135"/>
    </source>
</evidence>
<evidence type="ECO:0000255" key="4">
    <source>
        <dbReference type="PROSITE-ProRule" id="PRU00168"/>
    </source>
</evidence>
<evidence type="ECO:0000256" key="5">
    <source>
        <dbReference type="SAM" id="MobiDB-lite"/>
    </source>
</evidence>
<evidence type="ECO:0000269" key="6">
    <source>
    </source>
</evidence>
<feature type="chain" id="PRO_0000384468" description="Ras guanine nucleotide exchange factor J">
    <location>
        <begin position="1"/>
        <end position="812"/>
    </location>
</feature>
<feature type="domain" description="LisH" evidence="2">
    <location>
        <begin position="214"/>
        <end position="246"/>
    </location>
</feature>
<feature type="domain" description="N-terminal Ras-GEF" evidence="3">
    <location>
        <begin position="409"/>
        <end position="535"/>
    </location>
</feature>
<feature type="domain" description="Ras-GEF" evidence="4">
    <location>
        <begin position="573"/>
        <end position="804"/>
    </location>
</feature>
<feature type="region of interest" description="Disordered" evidence="5">
    <location>
        <begin position="1"/>
        <end position="146"/>
    </location>
</feature>
<feature type="region of interest" description="Disordered" evidence="5">
    <location>
        <begin position="320"/>
        <end position="382"/>
    </location>
</feature>
<feature type="compositionally biased region" description="Low complexity" evidence="5">
    <location>
        <begin position="1"/>
        <end position="36"/>
    </location>
</feature>
<feature type="compositionally biased region" description="Low complexity" evidence="5">
    <location>
        <begin position="53"/>
        <end position="65"/>
    </location>
</feature>
<feature type="compositionally biased region" description="Polar residues" evidence="5">
    <location>
        <begin position="75"/>
        <end position="86"/>
    </location>
</feature>
<feature type="compositionally biased region" description="Low complexity" evidence="5">
    <location>
        <begin position="87"/>
        <end position="101"/>
    </location>
</feature>
<feature type="compositionally biased region" description="Gly residues" evidence="5">
    <location>
        <begin position="131"/>
        <end position="141"/>
    </location>
</feature>
<feature type="compositionally biased region" description="Basic and acidic residues" evidence="5">
    <location>
        <begin position="323"/>
        <end position="343"/>
    </location>
</feature>
<feature type="compositionally biased region" description="Low complexity" evidence="5">
    <location>
        <begin position="344"/>
        <end position="382"/>
    </location>
</feature>
<reference key="1">
    <citation type="journal article" date="2005" name="Genome Biol.">
        <title>The Dictyostelium genome encodes numerous RasGEFs with multiple biological roles.</title>
        <authorList>
            <person name="Wilkins A."/>
            <person name="Szafranski K."/>
            <person name="Fraser D.J."/>
            <person name="Bakthavatsalam D."/>
            <person name="Mueller R."/>
            <person name="Fisher P.R."/>
            <person name="Gloeckner G."/>
            <person name="Eichinger L."/>
            <person name="Noegel A.A."/>
            <person name="Insall R.H."/>
        </authorList>
    </citation>
    <scope>NUCLEOTIDE SEQUENCE [GENOMIC DNA]</scope>
    <scope>DEVELOPMENTAL STAGE</scope>
    <source>
        <strain>AX4</strain>
    </source>
</reference>
<reference key="2">
    <citation type="journal article" date="2005" name="Nature">
        <title>The genome of the social amoeba Dictyostelium discoideum.</title>
        <authorList>
            <person name="Eichinger L."/>
            <person name="Pachebat J.A."/>
            <person name="Gloeckner G."/>
            <person name="Rajandream M.A."/>
            <person name="Sucgang R."/>
            <person name="Berriman M."/>
            <person name="Song J."/>
            <person name="Olsen R."/>
            <person name="Szafranski K."/>
            <person name="Xu Q."/>
            <person name="Tunggal B."/>
            <person name="Kummerfeld S."/>
            <person name="Madera M."/>
            <person name="Konfortov B.A."/>
            <person name="Rivero F."/>
            <person name="Bankier A.T."/>
            <person name="Lehmann R."/>
            <person name="Hamlin N."/>
            <person name="Davies R."/>
            <person name="Gaudet P."/>
            <person name="Fey P."/>
            <person name="Pilcher K."/>
            <person name="Chen G."/>
            <person name="Saunders D."/>
            <person name="Sodergren E.J."/>
            <person name="Davis P."/>
            <person name="Kerhornou A."/>
            <person name="Nie X."/>
            <person name="Hall N."/>
            <person name="Anjard C."/>
            <person name="Hemphill L."/>
            <person name="Bason N."/>
            <person name="Farbrother P."/>
            <person name="Desany B."/>
            <person name="Just E."/>
            <person name="Morio T."/>
            <person name="Rost R."/>
            <person name="Churcher C.M."/>
            <person name="Cooper J."/>
            <person name="Haydock S."/>
            <person name="van Driessche N."/>
            <person name="Cronin A."/>
            <person name="Goodhead I."/>
            <person name="Muzny D.M."/>
            <person name="Mourier T."/>
            <person name="Pain A."/>
            <person name="Lu M."/>
            <person name="Harper D."/>
            <person name="Lindsay R."/>
            <person name="Hauser H."/>
            <person name="James K.D."/>
            <person name="Quiles M."/>
            <person name="Madan Babu M."/>
            <person name="Saito T."/>
            <person name="Buchrieser C."/>
            <person name="Wardroper A."/>
            <person name="Felder M."/>
            <person name="Thangavelu M."/>
            <person name="Johnson D."/>
            <person name="Knights A."/>
            <person name="Loulseged H."/>
            <person name="Mungall K.L."/>
            <person name="Oliver K."/>
            <person name="Price C."/>
            <person name="Quail M.A."/>
            <person name="Urushihara H."/>
            <person name="Hernandez J."/>
            <person name="Rabbinowitsch E."/>
            <person name="Steffen D."/>
            <person name="Sanders M."/>
            <person name="Ma J."/>
            <person name="Kohara Y."/>
            <person name="Sharp S."/>
            <person name="Simmonds M.N."/>
            <person name="Spiegler S."/>
            <person name="Tivey A."/>
            <person name="Sugano S."/>
            <person name="White B."/>
            <person name="Walker D."/>
            <person name="Woodward J.R."/>
            <person name="Winckler T."/>
            <person name="Tanaka Y."/>
            <person name="Shaulsky G."/>
            <person name="Schleicher M."/>
            <person name="Weinstock G.M."/>
            <person name="Rosenthal A."/>
            <person name="Cox E.C."/>
            <person name="Chisholm R.L."/>
            <person name="Gibbs R.A."/>
            <person name="Loomis W.F."/>
            <person name="Platzer M."/>
            <person name="Kay R.R."/>
            <person name="Williams J.G."/>
            <person name="Dear P.H."/>
            <person name="Noegel A.A."/>
            <person name="Barrell B.G."/>
            <person name="Kuspa A."/>
        </authorList>
    </citation>
    <scope>NUCLEOTIDE SEQUENCE [LARGE SCALE GENOMIC DNA]</scope>
    <source>
        <strain>AX4</strain>
    </source>
</reference>
<name>GEFJ_DICDI</name>
<comment type="function">
    <text evidence="1">Promotes the exchange of Ras-bound GDP by GTP.</text>
</comment>
<comment type="developmental stage">
    <text evidence="6">Expressed during development.</text>
</comment>
<gene>
    <name type="primary">gefJ</name>
    <name type="synonym">rasGEFJ</name>
    <name type="ORF">DDB_0215008</name>
</gene>
<protein>
    <recommendedName>
        <fullName>Ras guanine nucleotide exchange factor J</fullName>
    </recommendedName>
    <alternativeName>
        <fullName>RasGEF domain-containing protein J</fullName>
    </alternativeName>
</protein>
<dbReference type="EMBL" id="AY160099">
    <property type="protein sequence ID" value="AAN46879.1"/>
    <property type="molecule type" value="Genomic_DNA"/>
</dbReference>
<dbReference type="EMBL" id="AAFI02000023">
    <property type="protein sequence ID" value="EAL68129.1"/>
    <property type="molecule type" value="Genomic_DNA"/>
</dbReference>
<dbReference type="RefSeq" id="XP_642094.1">
    <property type="nucleotide sequence ID" value="XM_637002.1"/>
</dbReference>
<dbReference type="SMR" id="Q8IS14"/>
<dbReference type="FunCoup" id="Q8IS14">
    <property type="interactions" value="55"/>
</dbReference>
<dbReference type="STRING" id="44689.Q8IS14"/>
<dbReference type="PaxDb" id="44689-DDB0215008"/>
<dbReference type="EnsemblProtists" id="EAL68129">
    <property type="protein sequence ID" value="EAL68129"/>
    <property type="gene ID" value="DDB_G0277913"/>
</dbReference>
<dbReference type="GeneID" id="8621305"/>
<dbReference type="KEGG" id="ddi:DDB_G0277913"/>
<dbReference type="dictyBase" id="DDB_G0277913">
    <property type="gene designation" value="gefJ"/>
</dbReference>
<dbReference type="VEuPathDB" id="AmoebaDB:DDB_G0277913"/>
<dbReference type="eggNOG" id="KOG3417">
    <property type="taxonomic scope" value="Eukaryota"/>
</dbReference>
<dbReference type="HOGENOM" id="CLU_343697_0_0_1"/>
<dbReference type="InParanoid" id="Q8IS14"/>
<dbReference type="OMA" id="VIRTWIK"/>
<dbReference type="PhylomeDB" id="Q8IS14"/>
<dbReference type="Reactome" id="R-DDI-193648">
    <property type="pathway name" value="NRAGE signals death through JNK"/>
</dbReference>
<dbReference type="Reactome" id="R-DDI-9013148">
    <property type="pathway name" value="CDC42 GTPase cycle"/>
</dbReference>
<dbReference type="Reactome" id="R-DDI-9013149">
    <property type="pathway name" value="RAC1 GTPase cycle"/>
</dbReference>
<dbReference type="PRO" id="PR:Q8IS14"/>
<dbReference type="Proteomes" id="UP000002195">
    <property type="component" value="Chromosome 3"/>
</dbReference>
<dbReference type="GO" id="GO:0005886">
    <property type="term" value="C:plasma membrane"/>
    <property type="evidence" value="ECO:0000318"/>
    <property type="project" value="GO_Central"/>
</dbReference>
<dbReference type="GO" id="GO:0005085">
    <property type="term" value="F:guanyl-nucleotide exchange factor activity"/>
    <property type="evidence" value="ECO:0000318"/>
    <property type="project" value="GO_Central"/>
</dbReference>
<dbReference type="GO" id="GO:0007265">
    <property type="term" value="P:Ras protein signal transduction"/>
    <property type="evidence" value="ECO:0000318"/>
    <property type="project" value="GO_Central"/>
</dbReference>
<dbReference type="CDD" id="cd00155">
    <property type="entry name" value="RasGEF"/>
    <property type="match status" value="1"/>
</dbReference>
<dbReference type="CDD" id="cd06224">
    <property type="entry name" value="REM"/>
    <property type="match status" value="1"/>
</dbReference>
<dbReference type="Gene3D" id="1.10.840.10">
    <property type="entry name" value="Ras guanine-nucleotide exchange factors catalytic domain"/>
    <property type="match status" value="1"/>
</dbReference>
<dbReference type="Gene3D" id="1.20.870.10">
    <property type="entry name" value="Son of sevenless (SoS) protein Chain: S domain 1"/>
    <property type="match status" value="1"/>
</dbReference>
<dbReference type="InterPro" id="IPR006594">
    <property type="entry name" value="LisH"/>
</dbReference>
<dbReference type="InterPro" id="IPR008937">
    <property type="entry name" value="Ras-like_GEF"/>
</dbReference>
<dbReference type="InterPro" id="IPR000651">
    <property type="entry name" value="Ras-like_Gua-exchang_fac_N"/>
</dbReference>
<dbReference type="InterPro" id="IPR023578">
    <property type="entry name" value="Ras_GEF_dom_sf"/>
</dbReference>
<dbReference type="InterPro" id="IPR001895">
    <property type="entry name" value="RASGEF_cat_dom"/>
</dbReference>
<dbReference type="InterPro" id="IPR036964">
    <property type="entry name" value="RASGEF_cat_dom_sf"/>
</dbReference>
<dbReference type="PANTHER" id="PTHR23113">
    <property type="entry name" value="GUANINE NUCLEOTIDE EXCHANGE FACTOR"/>
    <property type="match status" value="1"/>
</dbReference>
<dbReference type="PANTHER" id="PTHR23113:SF351">
    <property type="entry name" value="RAS GUANINE NUCLEOTIDE EXCHANGE FACTOR I-RELATED"/>
    <property type="match status" value="1"/>
</dbReference>
<dbReference type="Pfam" id="PF00617">
    <property type="entry name" value="RasGEF"/>
    <property type="match status" value="1"/>
</dbReference>
<dbReference type="Pfam" id="PF00618">
    <property type="entry name" value="RasGEF_N"/>
    <property type="match status" value="1"/>
</dbReference>
<dbReference type="SMART" id="SM00147">
    <property type="entry name" value="RasGEF"/>
    <property type="match status" value="1"/>
</dbReference>
<dbReference type="SMART" id="SM00229">
    <property type="entry name" value="RasGEFN"/>
    <property type="match status" value="1"/>
</dbReference>
<dbReference type="SUPFAM" id="SSF48366">
    <property type="entry name" value="Ras GEF"/>
    <property type="match status" value="1"/>
</dbReference>
<dbReference type="PROSITE" id="PS50896">
    <property type="entry name" value="LISH"/>
    <property type="match status" value="1"/>
</dbReference>
<dbReference type="PROSITE" id="PS50009">
    <property type="entry name" value="RASGEF_CAT"/>
    <property type="match status" value="1"/>
</dbReference>
<dbReference type="PROSITE" id="PS50212">
    <property type="entry name" value="RASGEF_NTER"/>
    <property type="match status" value="1"/>
</dbReference>
<keyword id="KW-0344">Guanine-nucleotide releasing factor</keyword>
<keyword id="KW-1185">Reference proteome</keyword>
<organism>
    <name type="scientific">Dictyostelium discoideum</name>
    <name type="common">Social amoeba</name>
    <dbReference type="NCBI Taxonomy" id="44689"/>
    <lineage>
        <taxon>Eukaryota</taxon>
        <taxon>Amoebozoa</taxon>
        <taxon>Evosea</taxon>
        <taxon>Eumycetozoa</taxon>
        <taxon>Dictyostelia</taxon>
        <taxon>Dictyosteliales</taxon>
        <taxon>Dictyosteliaceae</taxon>
        <taxon>Dictyostelium</taxon>
    </lineage>
</organism>
<accession>Q8IS14</accession>
<accession>Q54YV8</accession>